<dbReference type="EC" id="2.3.1.275" evidence="1"/>
<dbReference type="EMBL" id="AP008934">
    <property type="protein sequence ID" value="BAE18550.1"/>
    <property type="molecule type" value="Genomic_DNA"/>
</dbReference>
<dbReference type="RefSeq" id="WP_002483371.1">
    <property type="nucleotide sequence ID" value="NZ_MTGA01000038.1"/>
</dbReference>
<dbReference type="SMR" id="Q49XE7"/>
<dbReference type="GeneID" id="66867628"/>
<dbReference type="KEGG" id="ssp:SSP1405"/>
<dbReference type="eggNOG" id="COG0344">
    <property type="taxonomic scope" value="Bacteria"/>
</dbReference>
<dbReference type="HOGENOM" id="CLU_081254_4_0_9"/>
<dbReference type="OrthoDB" id="9777124at2"/>
<dbReference type="UniPathway" id="UPA00085"/>
<dbReference type="Proteomes" id="UP000006371">
    <property type="component" value="Chromosome"/>
</dbReference>
<dbReference type="GO" id="GO:0005886">
    <property type="term" value="C:plasma membrane"/>
    <property type="evidence" value="ECO:0007669"/>
    <property type="project" value="UniProtKB-SubCell"/>
</dbReference>
<dbReference type="GO" id="GO:0043772">
    <property type="term" value="F:acyl-phosphate glycerol-3-phosphate acyltransferase activity"/>
    <property type="evidence" value="ECO:0007669"/>
    <property type="project" value="UniProtKB-UniRule"/>
</dbReference>
<dbReference type="GO" id="GO:0008654">
    <property type="term" value="P:phospholipid biosynthetic process"/>
    <property type="evidence" value="ECO:0007669"/>
    <property type="project" value="UniProtKB-UniRule"/>
</dbReference>
<dbReference type="HAMAP" id="MF_01043">
    <property type="entry name" value="PlsY"/>
    <property type="match status" value="1"/>
</dbReference>
<dbReference type="InterPro" id="IPR003811">
    <property type="entry name" value="G3P_acylTferase_PlsY"/>
</dbReference>
<dbReference type="NCBIfam" id="TIGR00023">
    <property type="entry name" value="glycerol-3-phosphate 1-O-acyltransferase PlsY"/>
    <property type="match status" value="1"/>
</dbReference>
<dbReference type="PANTHER" id="PTHR30309:SF0">
    <property type="entry name" value="GLYCEROL-3-PHOSPHATE ACYLTRANSFERASE-RELATED"/>
    <property type="match status" value="1"/>
</dbReference>
<dbReference type="PANTHER" id="PTHR30309">
    <property type="entry name" value="INNER MEMBRANE PROTEIN YGIH"/>
    <property type="match status" value="1"/>
</dbReference>
<dbReference type="Pfam" id="PF02660">
    <property type="entry name" value="G3P_acyltransf"/>
    <property type="match status" value="1"/>
</dbReference>
<dbReference type="SMART" id="SM01207">
    <property type="entry name" value="G3P_acyltransf"/>
    <property type="match status" value="1"/>
</dbReference>
<sequence length="202" mass="22015">MMIVIMLILSYLIGAFPSGYVIGKLFFKKDIRQFGSGNTGATNSFRVLGKPAGFLVTFLDIFKGFIVVFFPLWLPVQAEGPITTFFTNGLIVGAFAILGHVYPVYLGFKGGKAVATSAGVILGVNPVLLLILAAIFFGILYLTKYVSLSSIIASICCVIGALLIRDYILFIVSIGVGVLLIIRHRTNIVRIFKGEEPKIKWM</sequence>
<organism>
    <name type="scientific">Staphylococcus saprophyticus subsp. saprophyticus (strain ATCC 15305 / DSM 20229 / NCIMB 8711 / NCTC 7292 / S-41)</name>
    <dbReference type="NCBI Taxonomy" id="342451"/>
    <lineage>
        <taxon>Bacteria</taxon>
        <taxon>Bacillati</taxon>
        <taxon>Bacillota</taxon>
        <taxon>Bacilli</taxon>
        <taxon>Bacillales</taxon>
        <taxon>Staphylococcaceae</taxon>
        <taxon>Staphylococcus</taxon>
    </lineage>
</organism>
<name>PLSY_STAS1</name>
<feature type="chain" id="PRO_0000188458" description="Glycerol-3-phosphate acyltransferase">
    <location>
        <begin position="1"/>
        <end position="202"/>
    </location>
</feature>
<feature type="transmembrane region" description="Helical" evidence="1">
    <location>
        <begin position="2"/>
        <end position="22"/>
    </location>
</feature>
<feature type="transmembrane region" description="Helical" evidence="1">
    <location>
        <begin position="54"/>
        <end position="74"/>
    </location>
</feature>
<feature type="transmembrane region" description="Helical" evidence="1">
    <location>
        <begin position="88"/>
        <end position="108"/>
    </location>
</feature>
<feature type="transmembrane region" description="Helical" evidence="1">
    <location>
        <begin position="120"/>
        <end position="140"/>
    </location>
</feature>
<feature type="transmembrane region" description="Helical" evidence="1">
    <location>
        <begin position="141"/>
        <end position="161"/>
    </location>
</feature>
<feature type="transmembrane region" description="Helical" evidence="1">
    <location>
        <begin position="162"/>
        <end position="182"/>
    </location>
</feature>
<comment type="function">
    <text evidence="1">Catalyzes the transfer of an acyl group from acyl-phosphate (acyl-PO(4)) to glycerol-3-phosphate (G3P) to form lysophosphatidic acid (LPA). This enzyme utilizes acyl-phosphate as fatty acyl donor, but not acyl-CoA or acyl-ACP.</text>
</comment>
<comment type="catalytic activity">
    <reaction evidence="1">
        <text>an acyl phosphate + sn-glycerol 3-phosphate = a 1-acyl-sn-glycero-3-phosphate + phosphate</text>
        <dbReference type="Rhea" id="RHEA:34075"/>
        <dbReference type="ChEBI" id="CHEBI:43474"/>
        <dbReference type="ChEBI" id="CHEBI:57597"/>
        <dbReference type="ChEBI" id="CHEBI:57970"/>
        <dbReference type="ChEBI" id="CHEBI:59918"/>
        <dbReference type="EC" id="2.3.1.275"/>
    </reaction>
</comment>
<comment type="pathway">
    <text evidence="1">Lipid metabolism; phospholipid metabolism.</text>
</comment>
<comment type="subunit">
    <text evidence="1">Probably interacts with PlsX.</text>
</comment>
<comment type="subcellular location">
    <subcellularLocation>
        <location evidence="1">Cell membrane</location>
        <topology evidence="1">Multi-pass membrane protein</topology>
    </subcellularLocation>
</comment>
<comment type="similarity">
    <text evidence="1">Belongs to the PlsY family.</text>
</comment>
<reference key="1">
    <citation type="journal article" date="2005" name="Proc. Natl. Acad. Sci. U.S.A.">
        <title>Whole genome sequence of Staphylococcus saprophyticus reveals the pathogenesis of uncomplicated urinary tract infection.</title>
        <authorList>
            <person name="Kuroda M."/>
            <person name="Yamashita A."/>
            <person name="Hirakawa H."/>
            <person name="Kumano M."/>
            <person name="Morikawa K."/>
            <person name="Higashide M."/>
            <person name="Maruyama A."/>
            <person name="Inose Y."/>
            <person name="Matoba K."/>
            <person name="Toh H."/>
            <person name="Kuhara S."/>
            <person name="Hattori M."/>
            <person name="Ohta T."/>
        </authorList>
    </citation>
    <scope>NUCLEOTIDE SEQUENCE [LARGE SCALE GENOMIC DNA]</scope>
    <source>
        <strain>ATCC 15305 / DSM 20229 / NCIMB 8711 / NCTC 7292 / S-41</strain>
    </source>
</reference>
<keyword id="KW-1003">Cell membrane</keyword>
<keyword id="KW-0444">Lipid biosynthesis</keyword>
<keyword id="KW-0443">Lipid metabolism</keyword>
<keyword id="KW-0472">Membrane</keyword>
<keyword id="KW-0594">Phospholipid biosynthesis</keyword>
<keyword id="KW-1208">Phospholipid metabolism</keyword>
<keyword id="KW-1185">Reference proteome</keyword>
<keyword id="KW-0808">Transferase</keyword>
<keyword id="KW-0812">Transmembrane</keyword>
<keyword id="KW-1133">Transmembrane helix</keyword>
<protein>
    <recommendedName>
        <fullName evidence="1">Glycerol-3-phosphate acyltransferase</fullName>
    </recommendedName>
    <alternativeName>
        <fullName evidence="1">Acyl-PO4 G3P acyltransferase</fullName>
    </alternativeName>
    <alternativeName>
        <fullName evidence="1">Acyl-phosphate--glycerol-3-phosphate acyltransferase</fullName>
    </alternativeName>
    <alternativeName>
        <fullName evidence="1">G3P acyltransferase</fullName>
        <shortName evidence="1">GPAT</shortName>
        <ecNumber evidence="1">2.3.1.275</ecNumber>
    </alternativeName>
    <alternativeName>
        <fullName evidence="1">Lysophosphatidic acid synthase</fullName>
        <shortName evidence="1">LPA synthase</shortName>
    </alternativeName>
</protein>
<evidence type="ECO:0000255" key="1">
    <source>
        <dbReference type="HAMAP-Rule" id="MF_01043"/>
    </source>
</evidence>
<gene>
    <name evidence="1" type="primary">plsY</name>
    <name type="ordered locus">SSP1405</name>
</gene>
<proteinExistence type="inferred from homology"/>
<accession>Q49XE7</accession>